<evidence type="ECO:0000255" key="1">
    <source>
        <dbReference type="HAMAP-Rule" id="MF_00416"/>
    </source>
</evidence>
<gene>
    <name evidence="1" type="primary">flgI</name>
    <name type="ordered locus">RHECIAT_CH0000740</name>
</gene>
<reference key="1">
    <citation type="journal article" date="2010" name="Appl. Environ. Microbiol.">
        <title>Conserved symbiotic plasmid DNA sequences in the multireplicon pangenomic structure of Rhizobium etli.</title>
        <authorList>
            <person name="Gonzalez V."/>
            <person name="Acosta J.L."/>
            <person name="Santamaria R.I."/>
            <person name="Bustos P."/>
            <person name="Fernandez J.L."/>
            <person name="Hernandez Gonzalez I.L."/>
            <person name="Diaz R."/>
            <person name="Flores M."/>
            <person name="Palacios R."/>
            <person name="Mora J."/>
            <person name="Davila G."/>
        </authorList>
    </citation>
    <scope>NUCLEOTIDE SEQUENCE [LARGE SCALE GENOMIC DNA]</scope>
    <source>
        <strain>CIAT 652</strain>
    </source>
</reference>
<keyword id="KW-0975">Bacterial flagellum</keyword>
<keyword id="KW-0574">Periplasm</keyword>
<keyword id="KW-0732">Signal</keyword>
<name>FLGI_RHIE6</name>
<comment type="function">
    <text evidence="1">Assembles around the rod to form the L-ring and probably protects the motor/basal body from shearing forces during rotation.</text>
</comment>
<comment type="subunit">
    <text evidence="1">The basal body constitutes a major portion of the flagellar organelle and consists of four rings (L,P,S, and M) mounted on a central rod.</text>
</comment>
<comment type="subcellular location">
    <subcellularLocation>
        <location evidence="1">Periplasm</location>
    </subcellularLocation>
    <subcellularLocation>
        <location evidence="1">Bacterial flagellum basal body</location>
    </subcellularLocation>
</comment>
<comment type="similarity">
    <text evidence="1">Belongs to the FlgI family.</text>
</comment>
<protein>
    <recommendedName>
        <fullName evidence="1">Flagellar P-ring protein</fullName>
    </recommendedName>
    <alternativeName>
        <fullName evidence="1">Basal body P-ring protein</fullName>
    </alternativeName>
</protein>
<sequence>MRLLFRFLTLVAVLAMSLADVAPAWALTSRIKDIASLQAGRDNQLIGYGLIVGLQGTGDGFRSSPFTEQSMRAMLQNLGISTQGGQSNAKNTAAVMVTANLPPFASPGSRIDVTVSSLGDATSLRGGTLVMTSLSGADGQIYAVAQGAVIVSGFQAQGQAATVTEGVTTAGRVPGGAIIERELPSRFKDSVNLVLQLRNPDFSTAIRIADIVNGYASARFGGPVAEAKDSQEVVIQKPRTADLTRLMADVENLIVETDTPAKVVINERTGTIVIGSDVRVSPVAVSYGTLTVQVTETPQIIQPEPFSRGRTAVQPQTDIAAEQTGGRVAIIDGPDLRTLVAGLNNIGVKPDGIIAILQGIKSAGALQAELVLQ</sequence>
<feature type="signal peptide" evidence="1">
    <location>
        <begin position="1"/>
        <end position="26"/>
    </location>
</feature>
<feature type="chain" id="PRO_1000123977" description="Flagellar P-ring protein">
    <location>
        <begin position="27"/>
        <end position="373"/>
    </location>
</feature>
<accession>B3PPM2</accession>
<organism>
    <name type="scientific">Rhizobium etli (strain CIAT 652)</name>
    <dbReference type="NCBI Taxonomy" id="491916"/>
    <lineage>
        <taxon>Bacteria</taxon>
        <taxon>Pseudomonadati</taxon>
        <taxon>Pseudomonadota</taxon>
        <taxon>Alphaproteobacteria</taxon>
        <taxon>Hyphomicrobiales</taxon>
        <taxon>Rhizobiaceae</taxon>
        <taxon>Rhizobium/Agrobacterium group</taxon>
        <taxon>Rhizobium</taxon>
    </lineage>
</organism>
<dbReference type="EMBL" id="CP001074">
    <property type="protein sequence ID" value="ACE89729.1"/>
    <property type="molecule type" value="Genomic_DNA"/>
</dbReference>
<dbReference type="SMR" id="B3PPM2"/>
<dbReference type="KEGG" id="rec:RHECIAT_CH0000740"/>
<dbReference type="eggNOG" id="COG1706">
    <property type="taxonomic scope" value="Bacteria"/>
</dbReference>
<dbReference type="HOGENOM" id="CLU_045235_1_0_5"/>
<dbReference type="Proteomes" id="UP000008817">
    <property type="component" value="Chromosome"/>
</dbReference>
<dbReference type="GO" id="GO:0009428">
    <property type="term" value="C:bacterial-type flagellum basal body, distal rod, P ring"/>
    <property type="evidence" value="ECO:0007669"/>
    <property type="project" value="InterPro"/>
</dbReference>
<dbReference type="GO" id="GO:0030288">
    <property type="term" value="C:outer membrane-bounded periplasmic space"/>
    <property type="evidence" value="ECO:0007669"/>
    <property type="project" value="InterPro"/>
</dbReference>
<dbReference type="GO" id="GO:0005198">
    <property type="term" value="F:structural molecule activity"/>
    <property type="evidence" value="ECO:0007669"/>
    <property type="project" value="InterPro"/>
</dbReference>
<dbReference type="GO" id="GO:0071973">
    <property type="term" value="P:bacterial-type flagellum-dependent cell motility"/>
    <property type="evidence" value="ECO:0007669"/>
    <property type="project" value="InterPro"/>
</dbReference>
<dbReference type="HAMAP" id="MF_00416">
    <property type="entry name" value="FlgI"/>
    <property type="match status" value="1"/>
</dbReference>
<dbReference type="InterPro" id="IPR001782">
    <property type="entry name" value="Flag_FlgI"/>
</dbReference>
<dbReference type="NCBIfam" id="NF003676">
    <property type="entry name" value="PRK05303.1"/>
    <property type="match status" value="1"/>
</dbReference>
<dbReference type="PANTHER" id="PTHR30381">
    <property type="entry name" value="FLAGELLAR P-RING PERIPLASMIC PROTEIN FLGI"/>
    <property type="match status" value="1"/>
</dbReference>
<dbReference type="PANTHER" id="PTHR30381:SF0">
    <property type="entry name" value="FLAGELLAR P-RING PROTEIN"/>
    <property type="match status" value="1"/>
</dbReference>
<dbReference type="Pfam" id="PF02119">
    <property type="entry name" value="FlgI"/>
    <property type="match status" value="1"/>
</dbReference>
<dbReference type="PRINTS" id="PR01010">
    <property type="entry name" value="FLGPRINGFLGI"/>
</dbReference>
<proteinExistence type="inferred from homology"/>